<keyword id="KW-1185">Reference proteome</keyword>
<keyword id="KW-0687">Ribonucleoprotein</keyword>
<keyword id="KW-0689">Ribosomal protein</keyword>
<dbReference type="EMBL" id="CP000386">
    <property type="protein sequence ID" value="ABG04266.1"/>
    <property type="molecule type" value="Genomic_DNA"/>
</dbReference>
<dbReference type="RefSeq" id="WP_011564283.1">
    <property type="nucleotide sequence ID" value="NC_008148.1"/>
</dbReference>
<dbReference type="SMR" id="Q1AWG2"/>
<dbReference type="STRING" id="266117.Rxyl_1302"/>
<dbReference type="KEGG" id="rxy:Rxyl_1302"/>
<dbReference type="eggNOG" id="COG0291">
    <property type="taxonomic scope" value="Bacteria"/>
</dbReference>
<dbReference type="HOGENOM" id="CLU_169643_4_3_11"/>
<dbReference type="OrthoDB" id="9804851at2"/>
<dbReference type="PhylomeDB" id="Q1AWG2"/>
<dbReference type="Proteomes" id="UP000006637">
    <property type="component" value="Chromosome"/>
</dbReference>
<dbReference type="GO" id="GO:0022625">
    <property type="term" value="C:cytosolic large ribosomal subunit"/>
    <property type="evidence" value="ECO:0007669"/>
    <property type="project" value="TreeGrafter"/>
</dbReference>
<dbReference type="GO" id="GO:0003735">
    <property type="term" value="F:structural constituent of ribosome"/>
    <property type="evidence" value="ECO:0007669"/>
    <property type="project" value="InterPro"/>
</dbReference>
<dbReference type="GO" id="GO:0006412">
    <property type="term" value="P:translation"/>
    <property type="evidence" value="ECO:0007669"/>
    <property type="project" value="UniProtKB-UniRule"/>
</dbReference>
<dbReference type="FunFam" id="4.10.410.60:FF:000001">
    <property type="entry name" value="50S ribosomal protein L35"/>
    <property type="match status" value="1"/>
</dbReference>
<dbReference type="Gene3D" id="4.10.410.60">
    <property type="match status" value="1"/>
</dbReference>
<dbReference type="HAMAP" id="MF_00514">
    <property type="entry name" value="Ribosomal_bL35"/>
    <property type="match status" value="1"/>
</dbReference>
<dbReference type="InterPro" id="IPR001706">
    <property type="entry name" value="Ribosomal_bL35"/>
</dbReference>
<dbReference type="InterPro" id="IPR021137">
    <property type="entry name" value="Ribosomal_bL35-like"/>
</dbReference>
<dbReference type="InterPro" id="IPR037229">
    <property type="entry name" value="Ribosomal_bL35_sf"/>
</dbReference>
<dbReference type="NCBIfam" id="TIGR00001">
    <property type="entry name" value="rpmI_bact"/>
    <property type="match status" value="1"/>
</dbReference>
<dbReference type="PANTHER" id="PTHR33343">
    <property type="entry name" value="54S RIBOSOMAL PROTEIN BL35M"/>
    <property type="match status" value="1"/>
</dbReference>
<dbReference type="PANTHER" id="PTHR33343:SF1">
    <property type="entry name" value="LARGE RIBOSOMAL SUBUNIT PROTEIN BL35M"/>
    <property type="match status" value="1"/>
</dbReference>
<dbReference type="Pfam" id="PF01632">
    <property type="entry name" value="Ribosomal_L35p"/>
    <property type="match status" value="1"/>
</dbReference>
<dbReference type="PRINTS" id="PR00064">
    <property type="entry name" value="RIBOSOMALL35"/>
</dbReference>
<dbReference type="SUPFAM" id="SSF143034">
    <property type="entry name" value="L35p-like"/>
    <property type="match status" value="1"/>
</dbReference>
<proteinExistence type="inferred from homology"/>
<feature type="chain" id="PRO_0000258746" description="Large ribosomal subunit protein bL35">
    <location>
        <begin position="1"/>
        <end position="65"/>
    </location>
</feature>
<gene>
    <name evidence="1" type="primary">rpmI</name>
    <name type="ordered locus">Rxyl_1302</name>
</gene>
<evidence type="ECO:0000255" key="1">
    <source>
        <dbReference type="HAMAP-Rule" id="MF_00514"/>
    </source>
</evidence>
<evidence type="ECO:0000305" key="2"/>
<accession>Q1AWG2</accession>
<organism>
    <name type="scientific">Rubrobacter xylanophilus (strain DSM 9941 / JCM 11954 / NBRC 16129 / PRD-1)</name>
    <dbReference type="NCBI Taxonomy" id="266117"/>
    <lineage>
        <taxon>Bacteria</taxon>
        <taxon>Bacillati</taxon>
        <taxon>Actinomycetota</taxon>
        <taxon>Rubrobacteria</taxon>
        <taxon>Rubrobacterales</taxon>
        <taxon>Rubrobacteraceae</taxon>
        <taxon>Rubrobacter</taxon>
    </lineage>
</organism>
<sequence length="65" mass="7750">MPKMKTHKGAAGRFEVMKRGKLRRRRAGHNHILEKKTSKRKRRLNTETYVNPADEKRVRRLLGVR</sequence>
<protein>
    <recommendedName>
        <fullName evidence="1">Large ribosomal subunit protein bL35</fullName>
    </recommendedName>
    <alternativeName>
        <fullName evidence="2">50S ribosomal protein L35</fullName>
    </alternativeName>
</protein>
<name>RL35_RUBXD</name>
<comment type="similarity">
    <text evidence="1">Belongs to the bacterial ribosomal protein bL35 family.</text>
</comment>
<reference key="1">
    <citation type="submission" date="2006-06" db="EMBL/GenBank/DDBJ databases">
        <title>Complete sequence of Rubrobacter xylanophilus DSM 9941.</title>
        <authorList>
            <consortium name="US DOE Joint Genome Institute"/>
            <person name="Copeland A."/>
            <person name="Lucas S."/>
            <person name="Lapidus A."/>
            <person name="Barry K."/>
            <person name="Detter J.C."/>
            <person name="Glavina del Rio T."/>
            <person name="Hammon N."/>
            <person name="Israni S."/>
            <person name="Dalin E."/>
            <person name="Tice H."/>
            <person name="Pitluck S."/>
            <person name="Munk A.C."/>
            <person name="Brettin T."/>
            <person name="Bruce D."/>
            <person name="Han C."/>
            <person name="Tapia R."/>
            <person name="Gilna P."/>
            <person name="Schmutz J."/>
            <person name="Larimer F."/>
            <person name="Land M."/>
            <person name="Hauser L."/>
            <person name="Kyrpides N."/>
            <person name="Lykidis A."/>
            <person name="da Costa M.S."/>
            <person name="Rainey F.A."/>
            <person name="Empadinhas N."/>
            <person name="Jolivet E."/>
            <person name="Battista J.R."/>
            <person name="Richardson P."/>
        </authorList>
    </citation>
    <scope>NUCLEOTIDE SEQUENCE [LARGE SCALE GENOMIC DNA]</scope>
    <source>
        <strain>DSM 9941 / JCM 11954 / NBRC 16129 / PRD-1</strain>
    </source>
</reference>